<keyword id="KW-0106">Calcium</keyword>
<keyword id="KW-1217">Cell adhesion impairing toxin</keyword>
<keyword id="KW-1015">Disulfide bond</keyword>
<keyword id="KW-1199">Hemostasis impairing toxin</keyword>
<keyword id="KW-0378">Hydrolase</keyword>
<keyword id="KW-0479">Metal-binding</keyword>
<keyword id="KW-0482">Metalloprotease</keyword>
<keyword id="KW-1201">Platelet aggregation inhibiting toxin</keyword>
<keyword id="KW-0645">Protease</keyword>
<keyword id="KW-0964">Secreted</keyword>
<keyword id="KW-0732">Signal</keyword>
<keyword id="KW-0800">Toxin</keyword>
<keyword id="KW-0862">Zinc</keyword>
<keyword id="KW-0865">Zymogen</keyword>
<dbReference type="EC" id="3.4.24.-"/>
<dbReference type="EMBL" id="GQ451440">
    <property type="protein sequence ID" value="ACV83934.1"/>
    <property type="molecule type" value="mRNA"/>
</dbReference>
<dbReference type="EMBL" id="JQ071899">
    <property type="protein sequence ID" value="AEY81222.1"/>
    <property type="molecule type" value="mRNA"/>
</dbReference>
<dbReference type="SMR" id="C9E1R9"/>
<dbReference type="GO" id="GO:0005576">
    <property type="term" value="C:extracellular region"/>
    <property type="evidence" value="ECO:0007669"/>
    <property type="project" value="UniProtKB-SubCell"/>
</dbReference>
<dbReference type="GO" id="GO:0005886">
    <property type="term" value="C:plasma membrane"/>
    <property type="evidence" value="ECO:0007669"/>
    <property type="project" value="TreeGrafter"/>
</dbReference>
<dbReference type="GO" id="GO:0046872">
    <property type="term" value="F:metal ion binding"/>
    <property type="evidence" value="ECO:0007669"/>
    <property type="project" value="UniProtKB-KW"/>
</dbReference>
<dbReference type="GO" id="GO:0004222">
    <property type="term" value="F:metalloendopeptidase activity"/>
    <property type="evidence" value="ECO:0007669"/>
    <property type="project" value="InterPro"/>
</dbReference>
<dbReference type="GO" id="GO:0090729">
    <property type="term" value="F:toxin activity"/>
    <property type="evidence" value="ECO:0007669"/>
    <property type="project" value="UniProtKB-KW"/>
</dbReference>
<dbReference type="GO" id="GO:0006508">
    <property type="term" value="P:proteolysis"/>
    <property type="evidence" value="ECO:0007669"/>
    <property type="project" value="UniProtKB-KW"/>
</dbReference>
<dbReference type="CDD" id="cd04269">
    <property type="entry name" value="ZnMc_adamalysin_II_like"/>
    <property type="match status" value="1"/>
</dbReference>
<dbReference type="FunFam" id="3.40.390.10:FF:000002">
    <property type="entry name" value="Disintegrin and metalloproteinase domain-containing protein 22"/>
    <property type="match status" value="1"/>
</dbReference>
<dbReference type="FunFam" id="4.10.70.10:FF:000005">
    <property type="entry name" value="Zinc metalloproteinase/disintegrin"/>
    <property type="match status" value="1"/>
</dbReference>
<dbReference type="Gene3D" id="3.40.390.10">
    <property type="entry name" value="Collagenase (Catalytic Domain)"/>
    <property type="match status" value="1"/>
</dbReference>
<dbReference type="Gene3D" id="4.10.70.10">
    <property type="entry name" value="Disintegrin domain"/>
    <property type="match status" value="1"/>
</dbReference>
<dbReference type="InterPro" id="IPR018358">
    <property type="entry name" value="Disintegrin_CS"/>
</dbReference>
<dbReference type="InterPro" id="IPR001762">
    <property type="entry name" value="Disintegrin_dom"/>
</dbReference>
<dbReference type="InterPro" id="IPR036436">
    <property type="entry name" value="Disintegrin_dom_sf"/>
</dbReference>
<dbReference type="InterPro" id="IPR024079">
    <property type="entry name" value="MetalloPept_cat_dom_sf"/>
</dbReference>
<dbReference type="InterPro" id="IPR001590">
    <property type="entry name" value="Peptidase_M12B"/>
</dbReference>
<dbReference type="InterPro" id="IPR002870">
    <property type="entry name" value="Peptidase_M12B_N"/>
</dbReference>
<dbReference type="InterPro" id="IPR034027">
    <property type="entry name" value="Reprolysin_adamalysin"/>
</dbReference>
<dbReference type="PANTHER" id="PTHR11905">
    <property type="entry name" value="ADAM A DISINTEGRIN AND METALLOPROTEASE DOMAIN"/>
    <property type="match status" value="1"/>
</dbReference>
<dbReference type="PANTHER" id="PTHR11905:SF32">
    <property type="entry name" value="DISINTEGRIN AND METALLOPROTEINASE DOMAIN-CONTAINING PROTEIN 28"/>
    <property type="match status" value="1"/>
</dbReference>
<dbReference type="Pfam" id="PF00200">
    <property type="entry name" value="Disintegrin"/>
    <property type="match status" value="1"/>
</dbReference>
<dbReference type="Pfam" id="PF01562">
    <property type="entry name" value="Pep_M12B_propep"/>
    <property type="match status" value="1"/>
</dbReference>
<dbReference type="Pfam" id="PF01421">
    <property type="entry name" value="Reprolysin"/>
    <property type="match status" value="1"/>
</dbReference>
<dbReference type="PRINTS" id="PR00289">
    <property type="entry name" value="DISINTEGRIN"/>
</dbReference>
<dbReference type="SMART" id="SM00050">
    <property type="entry name" value="DISIN"/>
    <property type="match status" value="1"/>
</dbReference>
<dbReference type="SUPFAM" id="SSF57552">
    <property type="entry name" value="Blood coagulation inhibitor (disintegrin)"/>
    <property type="match status" value="1"/>
</dbReference>
<dbReference type="SUPFAM" id="SSF55486">
    <property type="entry name" value="Metalloproteases ('zincins'), catalytic domain"/>
    <property type="match status" value="1"/>
</dbReference>
<dbReference type="PROSITE" id="PS50215">
    <property type="entry name" value="ADAM_MEPRO"/>
    <property type="match status" value="1"/>
</dbReference>
<dbReference type="PROSITE" id="PS00427">
    <property type="entry name" value="DISINTEGRIN_1"/>
    <property type="match status" value="1"/>
</dbReference>
<dbReference type="PROSITE" id="PS50214">
    <property type="entry name" value="DISINTEGRIN_2"/>
    <property type="match status" value="1"/>
</dbReference>
<dbReference type="PROSITE" id="PS00142">
    <property type="entry name" value="ZINC_PROTEASE"/>
    <property type="match status" value="1"/>
</dbReference>
<sequence length="478" mass="53814">MIQVLLVTICLAVFPYQGSSIILESGNVNDYEVVYPRKVTALPKGAVQPKYEDAMQYEFKVNGEPVVLHLEKNKGLFSEDYSETHYSPDGREITTYPLVEDHCYYHGRIENDADSTASISACNGLKGHFKLQGELYLIEPLKFPDSEAHAVFKYENVEKEDNAPKMCGVTQNWKSYEPIKKASQLNLTPEQQRFPQRYIELVIVADHRMFTKYNSNLNTIRIWVHEIVNTINVFYRSLHIVVSLTDLEIWSNQDQINVQSAAADTLEAFGEWRETVLLNRISHDNAQLLTAINFQGNIIGRAYTGSMCDPRKSVGIITDHSAINLWVAVTMAHELAHNLGISHDGNQCHCDANSCIMSEELSEELSFEFSDCSLNQYQTYLTDHNPQCMLNEPLGTDTVSRNELLEAGEECDCGSPANPCCDAATCKLRPGAQCAEGLCCDQCRFIKKGKICRRARGDNPDDRCTGQSADCPRNRFHA</sequence>
<comment type="function">
    <molecule>Snake venom metalloproteinase</molecule>
    <text evidence="1">Impairs hemostasis in the envenomed animal.</text>
</comment>
<comment type="function">
    <molecule>Disintegrin viridistatin-2</molecule>
    <text evidence="6">This recombinant protein inhibits ADP-induced platelet aggregation in whole human blood and this effect is concentration-dependent with an IC(50) of 34 nM.</text>
</comment>
<comment type="cofactor">
    <cofactor evidence="1">
        <name>Zn(2+)</name>
        <dbReference type="ChEBI" id="CHEBI:29105"/>
    </cofactor>
    <text evidence="1">Binds 1 zinc ion per subunit.</text>
</comment>
<comment type="subunit">
    <text evidence="1">Heterodimer; disulfide-linked (disintegrin).</text>
</comment>
<comment type="subcellular location">
    <subcellularLocation>
        <location evidence="1">Secreted</location>
    </subcellularLocation>
</comment>
<comment type="tissue specificity">
    <text>Expressed by the venom gland.</text>
</comment>
<comment type="miscellaneous">
    <text>The disintegrin belongs to the dimeric disintegrin subfamily.</text>
</comment>
<comment type="similarity">
    <text evidence="8">Belongs to the venom metalloproteinase (M12B) family. P-II subfamily. P-IIe sub-subfamily.</text>
</comment>
<accession>C9E1R9</accession>
<accession>H6WCH5</accession>
<organism>
    <name type="scientific">Crotalus viridis viridis</name>
    <name type="common">Prairie rattlesnake</name>
    <dbReference type="NCBI Taxonomy" id="8742"/>
    <lineage>
        <taxon>Eukaryota</taxon>
        <taxon>Metazoa</taxon>
        <taxon>Chordata</taxon>
        <taxon>Craniata</taxon>
        <taxon>Vertebrata</taxon>
        <taxon>Euteleostomi</taxon>
        <taxon>Lepidosauria</taxon>
        <taxon>Squamata</taxon>
        <taxon>Bifurcata</taxon>
        <taxon>Unidentata</taxon>
        <taxon>Episquamata</taxon>
        <taxon>Toxicofera</taxon>
        <taxon>Serpentes</taxon>
        <taxon>Colubroidea</taxon>
        <taxon>Viperidae</taxon>
        <taxon>Crotalinae</taxon>
        <taxon>Crotalus</taxon>
    </lineage>
</organism>
<evidence type="ECO:0000250" key="1"/>
<evidence type="ECO:0000250" key="2">
    <source>
        <dbReference type="UniProtKB" id="Q805F6"/>
    </source>
</evidence>
<evidence type="ECO:0000255" key="3"/>
<evidence type="ECO:0000255" key="4">
    <source>
        <dbReference type="PROSITE-ProRule" id="PRU00068"/>
    </source>
</evidence>
<evidence type="ECO:0000255" key="5">
    <source>
        <dbReference type="PROSITE-ProRule" id="PRU00276"/>
    </source>
</evidence>
<evidence type="ECO:0000269" key="6">
    <source>
    </source>
</evidence>
<evidence type="ECO:0000303" key="7">
    <source>
    </source>
</evidence>
<evidence type="ECO:0000305" key="8"/>
<evidence type="ECO:0000305" key="9">
    <source>
    </source>
</evidence>
<protein>
    <recommendedName>
        <fullName>Zinc metalloproteinase/disintegrin VMP-II</fullName>
    </recommendedName>
    <component>
        <recommendedName>
            <fullName>Snake venom metalloproteinase</fullName>
            <shortName>SVMP</shortName>
            <ecNumber>3.4.24.-</ecNumber>
        </recommendedName>
    </component>
    <component>
        <recommendedName>
            <fullName evidence="7">Disintegrin viridistatin-2</fullName>
        </recommendedName>
        <alternativeName>
            <fullName>Disintegrin beta subunit</fullName>
        </alternativeName>
    </component>
</protein>
<feature type="signal peptide" evidence="3">
    <location>
        <begin position="1"/>
        <end position="20"/>
    </location>
</feature>
<feature type="propeptide" id="PRO_0000407406" evidence="1">
    <location>
        <begin position="21"/>
        <end position="190"/>
    </location>
</feature>
<feature type="chain" id="PRO_0000407407" description="Snake venom metalloproteinase" evidence="1">
    <location>
        <begin position="191"/>
        <end position="393"/>
    </location>
</feature>
<feature type="propeptide" id="PRO_0000407408" evidence="1">
    <location>
        <begin position="394"/>
        <end position="405"/>
    </location>
</feature>
<feature type="chain" id="PRO_0000407409" description="Disintegrin viridistatin-2" evidence="9">
    <location>
        <begin position="406"/>
        <end position="478"/>
    </location>
</feature>
<feature type="domain" description="Peptidase M12B" evidence="5">
    <location>
        <begin position="197"/>
        <end position="393"/>
    </location>
</feature>
<feature type="domain" description="Disintegrin" evidence="4">
    <location>
        <begin position="414"/>
        <end position="478"/>
    </location>
</feature>
<feature type="short sequence motif" description="Cell attachment site">
    <location>
        <begin position="456"/>
        <end position="458"/>
    </location>
</feature>
<feature type="active site" evidence="5">
    <location>
        <position position="334"/>
    </location>
</feature>
<feature type="binding site" evidence="1">
    <location>
        <position position="200"/>
    </location>
    <ligand>
        <name>Ca(2+)</name>
        <dbReference type="ChEBI" id="CHEBI:29108"/>
    </ligand>
</feature>
<feature type="binding site" evidence="1">
    <location>
        <position position="284"/>
    </location>
    <ligand>
        <name>Ca(2+)</name>
        <dbReference type="ChEBI" id="CHEBI:29108"/>
    </ligand>
</feature>
<feature type="binding site" evidence="5">
    <location>
        <position position="333"/>
    </location>
    <ligand>
        <name>Zn(2+)</name>
        <dbReference type="ChEBI" id="CHEBI:29105"/>
        <note>catalytic</note>
    </ligand>
</feature>
<feature type="binding site" evidence="5">
    <location>
        <position position="337"/>
    </location>
    <ligand>
        <name>Zn(2+)</name>
        <dbReference type="ChEBI" id="CHEBI:29105"/>
        <note>catalytic</note>
    </ligand>
</feature>
<feature type="binding site" evidence="5">
    <location>
        <position position="343"/>
    </location>
    <ligand>
        <name>Zn(2+)</name>
        <dbReference type="ChEBI" id="CHEBI:29105"/>
        <note>catalytic</note>
    </ligand>
</feature>
<feature type="binding site" evidence="1">
    <location>
        <position position="388"/>
    </location>
    <ligand>
        <name>Ca(2+)</name>
        <dbReference type="ChEBI" id="CHEBI:29108"/>
    </ligand>
</feature>
<feature type="binding site" evidence="1">
    <location>
        <position position="391"/>
    </location>
    <ligand>
        <name>Ca(2+)</name>
        <dbReference type="ChEBI" id="CHEBI:29108"/>
    </ligand>
</feature>
<feature type="disulfide bond" evidence="5">
    <location>
        <begin position="308"/>
        <end position="388"/>
    </location>
</feature>
<feature type="disulfide bond" evidence="5">
    <location>
        <begin position="348"/>
        <end position="372"/>
    </location>
</feature>
<feature type="disulfide bond" evidence="5">
    <location>
        <begin position="350"/>
        <end position="355"/>
    </location>
</feature>
<feature type="disulfide bond" evidence="2">
    <location>
        <begin position="420"/>
        <end position="443"/>
    </location>
</feature>
<feature type="disulfide bond" description="Interchain" evidence="2">
    <location>
        <position position="421"/>
    </location>
</feature>
<feature type="disulfide bond" description="Interchain" evidence="2">
    <location>
        <position position="426"/>
    </location>
</feature>
<feature type="disulfide bond" evidence="2">
    <location>
        <begin position="434"/>
        <end position="440"/>
    </location>
</feature>
<feature type="disulfide bond" evidence="2">
    <location>
        <begin position="439"/>
        <end position="464"/>
    </location>
</feature>
<feature type="disulfide bond" evidence="2 4">
    <location>
        <begin position="452"/>
        <end position="471"/>
    </location>
</feature>
<proteinExistence type="evidence at transcript level"/>
<name>VM2V2_CROVV</name>
<reference key="1">
    <citation type="journal article" date="2010" name="Toxicon">
        <title>Molecular cloning and characterization of cDNAs encoding metalloproteinases from snake venom glands.</title>
        <authorList>
            <person name="Jia Y."/>
            <person name="Perez J.C."/>
        </authorList>
    </citation>
    <scope>NUCLEOTIDE SEQUENCE [MRNA]</scope>
    <source>
        <tissue>Venom gland</tissue>
    </source>
</reference>
<reference key="2">
    <citation type="journal article" date="2012" name="Toxicon">
        <title>Anti-invasive and anti-adhesive activities of a recombinant disintegrin, r-viridistatin 2, derived from the Prairie rattlesnake (Crotalus viridis viridis).</title>
        <authorList>
            <person name="Lucena S.E."/>
            <person name="Jia Y."/>
            <person name="Soto J.G."/>
            <person name="Parral J."/>
            <person name="Cantu E."/>
            <person name="Brannon J."/>
            <person name="Lardner K."/>
            <person name="Ramos C.J."/>
            <person name="Seoane A.I."/>
            <person name="Sanchez E.E."/>
        </authorList>
    </citation>
    <scope>NUCLEOTIDE SEQUENCE [MRNA] OF 406-478</scope>
    <scope>FUNCTION (DISINTEGRIN)</scope>
    <source>
        <tissue>Venom gland</tissue>
    </source>
</reference>